<keyword id="KW-1003">Cell membrane</keyword>
<keyword id="KW-0963">Cytoplasm</keyword>
<keyword id="KW-0968">Cytoplasmic vesicle</keyword>
<keyword id="KW-0472">Membrane</keyword>
<keyword id="KW-0597">Phosphoprotein</keyword>
<keyword id="KW-1185">Reference proteome</keyword>
<keyword id="KW-0832">Ubl conjugation</keyword>
<organism>
    <name type="scientific">Pongo abelii</name>
    <name type="common">Sumatran orangutan</name>
    <name type="synonym">Pongo pygmaeus abelii</name>
    <dbReference type="NCBI Taxonomy" id="9601"/>
    <lineage>
        <taxon>Eukaryota</taxon>
        <taxon>Metazoa</taxon>
        <taxon>Chordata</taxon>
        <taxon>Craniata</taxon>
        <taxon>Vertebrata</taxon>
        <taxon>Euteleostomi</taxon>
        <taxon>Mammalia</taxon>
        <taxon>Eutheria</taxon>
        <taxon>Euarchontoglires</taxon>
        <taxon>Primates</taxon>
        <taxon>Haplorrhini</taxon>
        <taxon>Catarrhini</taxon>
        <taxon>Hominidae</taxon>
        <taxon>Pongo</taxon>
    </lineage>
</organism>
<dbReference type="EMBL" id="CR857872">
    <property type="protein sequence ID" value="CAH90125.1"/>
    <property type="molecule type" value="mRNA"/>
</dbReference>
<dbReference type="RefSeq" id="NP_001127241.1">
    <property type="nucleotide sequence ID" value="NM_001133769.1"/>
</dbReference>
<dbReference type="BMRB" id="Q5RDN2"/>
<dbReference type="SMR" id="Q5RDN2"/>
<dbReference type="STRING" id="9601.ENSPPYP00000013781"/>
<dbReference type="GeneID" id="100174296"/>
<dbReference type="KEGG" id="pon:100174296"/>
<dbReference type="CTD" id="200734"/>
<dbReference type="eggNOG" id="KOG4590">
    <property type="taxonomic scope" value="Eukaryota"/>
</dbReference>
<dbReference type="InParanoid" id="Q5RDN2"/>
<dbReference type="OrthoDB" id="5786858at2759"/>
<dbReference type="Proteomes" id="UP000001595">
    <property type="component" value="Unplaced"/>
</dbReference>
<dbReference type="GO" id="GO:0005886">
    <property type="term" value="C:plasma membrane"/>
    <property type="evidence" value="ECO:0007669"/>
    <property type="project" value="UniProtKB-SubCell"/>
</dbReference>
<dbReference type="GO" id="GO:0030658">
    <property type="term" value="C:transport vesicle membrane"/>
    <property type="evidence" value="ECO:0007669"/>
    <property type="project" value="UniProtKB-SubCell"/>
</dbReference>
<dbReference type="GO" id="GO:0019901">
    <property type="term" value="F:protein kinase binding"/>
    <property type="evidence" value="ECO:0007669"/>
    <property type="project" value="TreeGrafter"/>
</dbReference>
<dbReference type="GO" id="GO:0010719">
    <property type="term" value="P:negative regulation of epithelial to mesenchymal transition"/>
    <property type="evidence" value="ECO:0000250"/>
    <property type="project" value="UniProtKB"/>
</dbReference>
<dbReference type="GO" id="GO:0070373">
    <property type="term" value="P:negative regulation of ERK1 and ERK2 cascade"/>
    <property type="evidence" value="ECO:0000250"/>
    <property type="project" value="UniProtKB"/>
</dbReference>
<dbReference type="GO" id="GO:1902747">
    <property type="term" value="P:negative regulation of lens fiber cell differentiation"/>
    <property type="evidence" value="ECO:0000250"/>
    <property type="project" value="UniProtKB"/>
</dbReference>
<dbReference type="GO" id="GO:0030512">
    <property type="term" value="P:negative regulation of transforming growth factor beta receptor signaling pathway"/>
    <property type="evidence" value="ECO:0000250"/>
    <property type="project" value="UniProtKB"/>
</dbReference>
<dbReference type="CDD" id="cd10574">
    <property type="entry name" value="EVH1_SPRED-like"/>
    <property type="match status" value="1"/>
</dbReference>
<dbReference type="FunFam" id="2.30.29.30:FF:000052">
    <property type="entry name" value="Sprouty-related, EVH1 domain containing 2"/>
    <property type="match status" value="1"/>
</dbReference>
<dbReference type="Gene3D" id="2.30.29.30">
    <property type="entry name" value="Pleckstrin-homology domain (PH domain)/Phosphotyrosine-binding domain (PTB)"/>
    <property type="match status" value="1"/>
</dbReference>
<dbReference type="InterPro" id="IPR023337">
    <property type="entry name" value="KBD"/>
</dbReference>
<dbReference type="InterPro" id="IPR011993">
    <property type="entry name" value="PH-like_dom_sf"/>
</dbReference>
<dbReference type="InterPro" id="IPR041937">
    <property type="entry name" value="SPRE_EVH1"/>
</dbReference>
<dbReference type="InterPro" id="IPR007875">
    <property type="entry name" value="Sprouty"/>
</dbReference>
<dbReference type="InterPro" id="IPR000697">
    <property type="entry name" value="WH1/EVH1_dom"/>
</dbReference>
<dbReference type="PANTHER" id="PTHR11202:SF11">
    <property type="entry name" value="SPROUTY-RELATED, EVH1 DOMAIN-CONTAINING PROTEIN 2"/>
    <property type="match status" value="1"/>
</dbReference>
<dbReference type="PANTHER" id="PTHR11202">
    <property type="entry name" value="SPROUTY-RELATED, EVH1 DOMAIN-CONTAINING PROTEIN FAMILY MEMBER"/>
    <property type="match status" value="1"/>
</dbReference>
<dbReference type="Pfam" id="PF05210">
    <property type="entry name" value="Sprouty"/>
    <property type="match status" value="1"/>
</dbReference>
<dbReference type="Pfam" id="PF00568">
    <property type="entry name" value="WH1"/>
    <property type="match status" value="1"/>
</dbReference>
<dbReference type="SMART" id="SM00461">
    <property type="entry name" value="WH1"/>
    <property type="match status" value="1"/>
</dbReference>
<dbReference type="SUPFAM" id="SSF50729">
    <property type="entry name" value="PH domain-like"/>
    <property type="match status" value="1"/>
</dbReference>
<dbReference type="PROSITE" id="PS51488">
    <property type="entry name" value="KBD"/>
    <property type="match status" value="1"/>
</dbReference>
<dbReference type="PROSITE" id="PS51227">
    <property type="entry name" value="SPR"/>
    <property type="match status" value="1"/>
</dbReference>
<dbReference type="PROSITE" id="PS50229">
    <property type="entry name" value="WH1"/>
    <property type="match status" value="1"/>
</dbReference>
<reference key="1">
    <citation type="submission" date="2004-11" db="EMBL/GenBank/DDBJ databases">
        <authorList>
            <consortium name="The German cDNA consortium"/>
        </authorList>
    </citation>
    <scope>NUCLEOTIDE SEQUENCE [LARGE SCALE MRNA]</scope>
    <source>
        <tissue>Brain cortex</tissue>
    </source>
</reference>
<accession>Q5RDN2</accession>
<name>SPRE2_PONAB</name>
<evidence type="ECO:0000250" key="1">
    <source>
        <dbReference type="UniProtKB" id="Q7Z698"/>
    </source>
</evidence>
<evidence type="ECO:0000250" key="2">
    <source>
        <dbReference type="UniProtKB" id="Q924S7"/>
    </source>
</evidence>
<evidence type="ECO:0000255" key="3">
    <source>
        <dbReference type="PROSITE-ProRule" id="PRU00410"/>
    </source>
</evidence>
<evidence type="ECO:0000255" key="4">
    <source>
        <dbReference type="PROSITE-ProRule" id="PRU00572"/>
    </source>
</evidence>
<evidence type="ECO:0000255" key="5">
    <source>
        <dbReference type="PROSITE-ProRule" id="PRU00821"/>
    </source>
</evidence>
<evidence type="ECO:0000256" key="6">
    <source>
        <dbReference type="SAM" id="MobiDB-lite"/>
    </source>
</evidence>
<sequence length="418" mass="47572">MTEETHPDDDSYIVRVKAVVMTRDDSSGGWFPQEGGGISRVGVCKVMHPEGNGRSGFLIHGERQKDKLVVLECYVRKDLVYTKANPTFHHWKVDNRKFGLTFQSPADARAFDRGVRKAIEDLIEGSTTSSSTIHNEAELGDDDVFTTATDSSSNSSQKREQPTRTVSSPTSCEHRRIYTLGHLHDSYPTDHYHLDQPMPRPYRQVSFPDDDEEIVRINPREKIWMTGYEDYRHAPVRGKYPDPSEDVDSSYVRFAKGEVPKHDYNYPYVDSSDFGLGEDPKGRGGSVIKTQPSRGKSRRRKEDGERSRCVYCRDMFNHEENRRGHCQDAPDSVRTCIRRVSCMWCADSMLYHCMSDPEGDYTDPCSCDTSDEKFCLRWMALIALSFLAPCMCCYLPLRACYHCGVMCRCCGGKHKAAA</sequence>
<proteinExistence type="evidence at transcript level"/>
<comment type="function">
    <text evidence="1 2">Negatively regulates Ras signaling pathways and downstream activation of MAP kinases. Recruits and translocates NF1 to the cell membrane, thereby enabling NF1-dependent hydrolysis of active GTP-bound Ras to inactive GDP-bound Ras (By similarity). Inhibits fibroblast growth factor (FGF)-induced retinal lens fiber differentiation, probably by inhibiting FGF-mediated phosphorylation of ERK1/2 (By similarity). Inhibits TGFB-induced epithelial-to-mesenchymal transition in lens epithelial cells (By similarity).</text>
</comment>
<comment type="subunit">
    <text evidence="1 2">Homodimer and heterodimer. Able to interact with SPRED1 to form heterodimers (By similarity). Interacts with RAS (By similarity). May interact with ZDHHC13 (via ANK repeats) and ZDHHC17 (via ANK repeats) (By similarity). Interacts with TESK1 (By similarity). Interacts with NF1 (By similarity).</text>
</comment>
<comment type="subcellular location">
    <subcellularLocation>
        <location evidence="2">Cell membrane</location>
        <topology evidence="2">Peripheral membrane protein</topology>
        <orientation evidence="2">Cytoplasmic side</orientation>
    </subcellularLocation>
    <subcellularLocation>
        <location evidence="1">Cytoplasmic vesicle</location>
        <location evidence="1">Secretory vesicle membrane</location>
        <topology evidence="1">Peripheral membrane protein</topology>
        <orientation evidence="1">Cytoplasmic side</orientation>
    </subcellularLocation>
    <subcellularLocation>
        <location evidence="1">Cytoplasm</location>
    </subcellularLocation>
    <text evidence="1">Detected in the cytoplasm of the stratum spinosum cells, where it is associated with cytoplasmic vesicles that are supposed to be secretory granules.</text>
</comment>
<comment type="PTM">
    <text evidence="1">Phosphorylated on serine and threonine residues. Phosphorylated on tyrosine. Phosphorylation of Tyr-228 and Tyr-231 are required for ubiquitination.</text>
</comment>
<comment type="PTM">
    <text evidence="1">Ubiquitinated; leading to degradation by the proteasome.</text>
</comment>
<gene>
    <name type="primary">SPRED2</name>
</gene>
<protein>
    <recommendedName>
        <fullName>Sprouty-related, EVH1 domain-containing protein 2</fullName>
        <shortName>Spred-2</shortName>
    </recommendedName>
</protein>
<feature type="chain" id="PRO_0000354678" description="Sprouty-related, EVH1 domain-containing protein 2">
    <location>
        <begin position="1"/>
        <end position="418"/>
    </location>
</feature>
<feature type="domain" description="WH1" evidence="3">
    <location>
        <begin position="5"/>
        <end position="122"/>
    </location>
</feature>
<feature type="domain" description="KBD" evidence="5">
    <location>
        <begin position="201"/>
        <end position="257"/>
    </location>
</feature>
<feature type="domain" description="SPR" evidence="4">
    <location>
        <begin position="308"/>
        <end position="416"/>
    </location>
</feature>
<feature type="region of interest" description="Disordered" evidence="6">
    <location>
        <begin position="127"/>
        <end position="172"/>
    </location>
</feature>
<feature type="region of interest" description="Disordered" evidence="6">
    <location>
        <begin position="275"/>
        <end position="302"/>
    </location>
</feature>
<feature type="compositionally biased region" description="Polar residues" evidence="6">
    <location>
        <begin position="146"/>
        <end position="156"/>
    </location>
</feature>
<feature type="modified residue" description="Phosphoserine" evidence="1">
    <location>
        <position position="206"/>
    </location>
</feature>
<feature type="modified residue" description="Phosphotyrosine" evidence="1">
    <location>
        <position position="228"/>
    </location>
</feature>
<feature type="modified residue" description="Phosphotyrosine" evidence="1">
    <location>
        <position position="231"/>
    </location>
</feature>